<dbReference type="EC" id="3.2.2.27" evidence="1"/>
<dbReference type="EMBL" id="AL111168">
    <property type="protein sequence ID" value="CAL34257.1"/>
    <property type="molecule type" value="Genomic_DNA"/>
</dbReference>
<dbReference type="PIR" id="F81424">
    <property type="entry name" value="F81424"/>
</dbReference>
<dbReference type="RefSeq" id="WP_002851931.1">
    <property type="nucleotide sequence ID" value="NZ_SZUC01000005.1"/>
</dbReference>
<dbReference type="RefSeq" id="YP_002343546.1">
    <property type="nucleotide sequence ID" value="NC_002163.1"/>
</dbReference>
<dbReference type="SMR" id="Q9PJ40"/>
<dbReference type="IntAct" id="Q9PJ40">
    <property type="interactions" value="22"/>
</dbReference>
<dbReference type="STRING" id="192222.Cj0086c"/>
<dbReference type="PaxDb" id="192222-Cj0086c"/>
<dbReference type="EnsemblBacteria" id="CAL34257">
    <property type="protein sequence ID" value="CAL34257"/>
    <property type="gene ID" value="Cj0086c"/>
</dbReference>
<dbReference type="GeneID" id="904411"/>
<dbReference type="KEGG" id="cje:Cj0086c"/>
<dbReference type="PATRIC" id="fig|192222.6.peg.84"/>
<dbReference type="eggNOG" id="COG0692">
    <property type="taxonomic scope" value="Bacteria"/>
</dbReference>
<dbReference type="HOGENOM" id="CLU_032162_1_1_7"/>
<dbReference type="OrthoDB" id="9804372at2"/>
<dbReference type="Proteomes" id="UP000000799">
    <property type="component" value="Chromosome"/>
</dbReference>
<dbReference type="GO" id="GO:0005737">
    <property type="term" value="C:cytoplasm"/>
    <property type="evidence" value="ECO:0007669"/>
    <property type="project" value="UniProtKB-SubCell"/>
</dbReference>
<dbReference type="GO" id="GO:0004844">
    <property type="term" value="F:uracil DNA N-glycosylase activity"/>
    <property type="evidence" value="ECO:0007669"/>
    <property type="project" value="UniProtKB-UniRule"/>
</dbReference>
<dbReference type="GO" id="GO:0097510">
    <property type="term" value="P:base-excision repair, AP site formation via deaminated base removal"/>
    <property type="evidence" value="ECO:0007669"/>
    <property type="project" value="TreeGrafter"/>
</dbReference>
<dbReference type="CDD" id="cd10027">
    <property type="entry name" value="UDG-F1-like"/>
    <property type="match status" value="1"/>
</dbReference>
<dbReference type="FunFam" id="3.40.470.10:FF:000001">
    <property type="entry name" value="Uracil-DNA glycosylase"/>
    <property type="match status" value="1"/>
</dbReference>
<dbReference type="Gene3D" id="3.40.470.10">
    <property type="entry name" value="Uracil-DNA glycosylase-like domain"/>
    <property type="match status" value="1"/>
</dbReference>
<dbReference type="HAMAP" id="MF_00148">
    <property type="entry name" value="UDG"/>
    <property type="match status" value="1"/>
</dbReference>
<dbReference type="InterPro" id="IPR002043">
    <property type="entry name" value="UDG_fam1"/>
</dbReference>
<dbReference type="InterPro" id="IPR018085">
    <property type="entry name" value="Ura-DNA_Glyclase_AS"/>
</dbReference>
<dbReference type="InterPro" id="IPR005122">
    <property type="entry name" value="Uracil-DNA_glycosylase-like"/>
</dbReference>
<dbReference type="InterPro" id="IPR036895">
    <property type="entry name" value="Uracil-DNA_glycosylase-like_sf"/>
</dbReference>
<dbReference type="NCBIfam" id="NF003588">
    <property type="entry name" value="PRK05254.1-1"/>
    <property type="match status" value="1"/>
</dbReference>
<dbReference type="NCBIfam" id="NF003589">
    <property type="entry name" value="PRK05254.1-2"/>
    <property type="match status" value="1"/>
</dbReference>
<dbReference type="NCBIfam" id="NF003591">
    <property type="entry name" value="PRK05254.1-4"/>
    <property type="match status" value="1"/>
</dbReference>
<dbReference type="NCBIfam" id="NF003592">
    <property type="entry name" value="PRK05254.1-5"/>
    <property type="match status" value="1"/>
</dbReference>
<dbReference type="NCBIfam" id="TIGR00628">
    <property type="entry name" value="ung"/>
    <property type="match status" value="1"/>
</dbReference>
<dbReference type="PANTHER" id="PTHR11264">
    <property type="entry name" value="URACIL-DNA GLYCOSYLASE"/>
    <property type="match status" value="1"/>
</dbReference>
<dbReference type="PANTHER" id="PTHR11264:SF0">
    <property type="entry name" value="URACIL-DNA GLYCOSYLASE"/>
    <property type="match status" value="1"/>
</dbReference>
<dbReference type="Pfam" id="PF03167">
    <property type="entry name" value="UDG"/>
    <property type="match status" value="1"/>
</dbReference>
<dbReference type="SMART" id="SM00986">
    <property type="entry name" value="UDG"/>
    <property type="match status" value="1"/>
</dbReference>
<dbReference type="SMART" id="SM00987">
    <property type="entry name" value="UreE_C"/>
    <property type="match status" value="1"/>
</dbReference>
<dbReference type="SUPFAM" id="SSF52141">
    <property type="entry name" value="Uracil-DNA glycosylase-like"/>
    <property type="match status" value="1"/>
</dbReference>
<dbReference type="PROSITE" id="PS00130">
    <property type="entry name" value="U_DNA_GLYCOSYLASE"/>
    <property type="match status" value="1"/>
</dbReference>
<evidence type="ECO:0000255" key="1">
    <source>
        <dbReference type="HAMAP-Rule" id="MF_00148"/>
    </source>
</evidence>
<feature type="chain" id="PRO_0000176077" description="Uracil-DNA glycosylase">
    <location>
        <begin position="1"/>
        <end position="231"/>
    </location>
</feature>
<feature type="active site" description="Proton acceptor" evidence="1">
    <location>
        <position position="74"/>
    </location>
</feature>
<gene>
    <name evidence="1" type="primary">ung</name>
    <name type="ordered locus">Cj0086c</name>
</gene>
<accession>Q9PJ40</accession>
<accession>Q0PC51</accession>
<reference key="1">
    <citation type="journal article" date="2000" name="Nature">
        <title>The genome sequence of the food-borne pathogen Campylobacter jejuni reveals hypervariable sequences.</title>
        <authorList>
            <person name="Parkhill J."/>
            <person name="Wren B.W."/>
            <person name="Mungall K.L."/>
            <person name="Ketley J.M."/>
            <person name="Churcher C.M."/>
            <person name="Basham D."/>
            <person name="Chillingworth T."/>
            <person name="Davies R.M."/>
            <person name="Feltwell T."/>
            <person name="Holroyd S."/>
            <person name="Jagels K."/>
            <person name="Karlyshev A.V."/>
            <person name="Moule S."/>
            <person name="Pallen M.J."/>
            <person name="Penn C.W."/>
            <person name="Quail M.A."/>
            <person name="Rajandream M.A."/>
            <person name="Rutherford K.M."/>
            <person name="van Vliet A.H.M."/>
            <person name="Whitehead S."/>
            <person name="Barrell B.G."/>
        </authorList>
    </citation>
    <scope>NUCLEOTIDE SEQUENCE [LARGE SCALE GENOMIC DNA]</scope>
    <source>
        <strain>ATCC 700819 / NCTC 11168</strain>
    </source>
</reference>
<sequence length="231" mass="26341">MEEITINIDKIKINDDWKEFLRDEFQKKYFLEIKKQYLNAINQNIIIYPPANLIFNAFNLCPLKEIKIIILGQDPYHQPNQAMGLSFSVPKNVKIPPSLNNIFKELQNDLNITPAKSGDLSSWAKQGVLLLNSILSVEANKAASHSSWGWQEFSDAIIHKLSNEKSGLVFMLWGNYAKNKEILIDNTKHLILKAAHPSPLARTGFLGCKHFSKANEFLKKVGKIPIDWKIV</sequence>
<protein>
    <recommendedName>
        <fullName evidence="1">Uracil-DNA glycosylase</fullName>
        <shortName evidence="1">UDG</shortName>
        <ecNumber evidence="1">3.2.2.27</ecNumber>
    </recommendedName>
</protein>
<proteinExistence type="inferred from homology"/>
<comment type="function">
    <text evidence="1">Excises uracil residues from the DNA which can arise as a result of misincorporation of dUMP residues by DNA polymerase or due to deamination of cytosine.</text>
</comment>
<comment type="catalytic activity">
    <reaction evidence="1">
        <text>Hydrolyzes single-stranded DNA or mismatched double-stranded DNA and polynucleotides, releasing free uracil.</text>
        <dbReference type="EC" id="3.2.2.27"/>
    </reaction>
</comment>
<comment type="subcellular location">
    <subcellularLocation>
        <location evidence="1">Cytoplasm</location>
    </subcellularLocation>
</comment>
<comment type="similarity">
    <text evidence="1">Belongs to the uracil-DNA glycosylase (UDG) superfamily. UNG family.</text>
</comment>
<name>UNG_CAMJE</name>
<organism>
    <name type="scientific">Campylobacter jejuni subsp. jejuni serotype O:2 (strain ATCC 700819 / NCTC 11168)</name>
    <dbReference type="NCBI Taxonomy" id="192222"/>
    <lineage>
        <taxon>Bacteria</taxon>
        <taxon>Pseudomonadati</taxon>
        <taxon>Campylobacterota</taxon>
        <taxon>Epsilonproteobacteria</taxon>
        <taxon>Campylobacterales</taxon>
        <taxon>Campylobacteraceae</taxon>
        <taxon>Campylobacter</taxon>
    </lineage>
</organism>
<keyword id="KW-0963">Cytoplasm</keyword>
<keyword id="KW-0227">DNA damage</keyword>
<keyword id="KW-0234">DNA repair</keyword>
<keyword id="KW-0378">Hydrolase</keyword>
<keyword id="KW-1185">Reference proteome</keyword>